<protein>
    <recommendedName>
        <fullName evidence="1">Putative pterin-4-alpha-carbinolamine dehydratase</fullName>
        <shortName evidence="1">PHS</shortName>
        <ecNumber evidence="1">4.2.1.96</ecNumber>
    </recommendedName>
    <alternativeName>
        <fullName evidence="1">4-alpha-hydroxy-tetrahydropterin dehydratase</fullName>
    </alternativeName>
    <alternativeName>
        <fullName evidence="1">Pterin carbinolamine dehydratase</fullName>
        <shortName evidence="1">PCD</shortName>
    </alternativeName>
</protein>
<evidence type="ECO:0000255" key="1">
    <source>
        <dbReference type="HAMAP-Rule" id="MF_00434"/>
    </source>
</evidence>
<keyword id="KW-0456">Lyase</keyword>
<keyword id="KW-1185">Reference proteome</keyword>
<gene>
    <name type="ordered locus">Pro_0490</name>
</gene>
<proteinExistence type="inferred from homology"/>
<sequence>MENKLLSSQEIQELRKSLPTWEEAEGKLVKRFKFTNFIEAFGFMTKIAIISESLSHHPEWTNIYSEVIIRLSTHDMGGITMLDYKLAKAIDAIKYE</sequence>
<accession>Q7VD93</accession>
<name>PHS_PROMA</name>
<dbReference type="EC" id="4.2.1.96" evidence="1"/>
<dbReference type="EMBL" id="AE017126">
    <property type="protein sequence ID" value="AAP99535.1"/>
    <property type="molecule type" value="Genomic_DNA"/>
</dbReference>
<dbReference type="RefSeq" id="NP_874883.1">
    <property type="nucleotide sequence ID" value="NC_005042.1"/>
</dbReference>
<dbReference type="RefSeq" id="WP_011124644.1">
    <property type="nucleotide sequence ID" value="NC_005042.1"/>
</dbReference>
<dbReference type="SMR" id="Q7VD93"/>
<dbReference type="STRING" id="167539.Pro_0490"/>
<dbReference type="EnsemblBacteria" id="AAP99535">
    <property type="protein sequence ID" value="AAP99535"/>
    <property type="gene ID" value="Pro_0490"/>
</dbReference>
<dbReference type="KEGG" id="pma:Pro_0490"/>
<dbReference type="PATRIC" id="fig|167539.5.peg.503"/>
<dbReference type="eggNOG" id="COG2154">
    <property type="taxonomic scope" value="Bacteria"/>
</dbReference>
<dbReference type="HOGENOM" id="CLU_081974_3_2_3"/>
<dbReference type="OrthoDB" id="9794987at2"/>
<dbReference type="Proteomes" id="UP000001420">
    <property type="component" value="Chromosome"/>
</dbReference>
<dbReference type="GO" id="GO:0008124">
    <property type="term" value="F:4-alpha-hydroxytetrahydrobiopterin dehydratase activity"/>
    <property type="evidence" value="ECO:0007669"/>
    <property type="project" value="UniProtKB-UniRule"/>
</dbReference>
<dbReference type="GO" id="GO:0006729">
    <property type="term" value="P:tetrahydrobiopterin biosynthetic process"/>
    <property type="evidence" value="ECO:0007669"/>
    <property type="project" value="InterPro"/>
</dbReference>
<dbReference type="CDD" id="cd00914">
    <property type="entry name" value="PCD_DCoH_subfamily_b"/>
    <property type="match status" value="1"/>
</dbReference>
<dbReference type="Gene3D" id="3.30.1360.20">
    <property type="entry name" value="Transcriptional coactivator/pterin dehydratase"/>
    <property type="match status" value="1"/>
</dbReference>
<dbReference type="HAMAP" id="MF_00434">
    <property type="entry name" value="Pterin_4_alpha"/>
    <property type="match status" value="1"/>
</dbReference>
<dbReference type="InterPro" id="IPR036428">
    <property type="entry name" value="PCD_sf"/>
</dbReference>
<dbReference type="InterPro" id="IPR001533">
    <property type="entry name" value="Pterin_deHydtase"/>
</dbReference>
<dbReference type="NCBIfam" id="NF002017">
    <property type="entry name" value="PRK00823.1-2"/>
    <property type="match status" value="1"/>
</dbReference>
<dbReference type="NCBIfam" id="NF002018">
    <property type="entry name" value="PRK00823.1-3"/>
    <property type="match status" value="1"/>
</dbReference>
<dbReference type="PANTHER" id="PTHR12599">
    <property type="entry name" value="PTERIN-4-ALPHA-CARBINOLAMINE DEHYDRATASE"/>
    <property type="match status" value="1"/>
</dbReference>
<dbReference type="PANTHER" id="PTHR12599:SF0">
    <property type="entry name" value="PTERIN-4-ALPHA-CARBINOLAMINE DEHYDRATASE"/>
    <property type="match status" value="1"/>
</dbReference>
<dbReference type="Pfam" id="PF01329">
    <property type="entry name" value="Pterin_4a"/>
    <property type="match status" value="1"/>
</dbReference>
<dbReference type="SUPFAM" id="SSF55248">
    <property type="entry name" value="PCD-like"/>
    <property type="match status" value="1"/>
</dbReference>
<feature type="chain" id="PRO_0000063088" description="Putative pterin-4-alpha-carbinolamine dehydratase">
    <location>
        <begin position="1"/>
        <end position="96"/>
    </location>
</feature>
<reference key="1">
    <citation type="journal article" date="2003" name="Proc. Natl. Acad. Sci. U.S.A.">
        <title>Genome sequence of the cyanobacterium Prochlorococcus marinus SS120, a nearly minimal oxyphototrophic genome.</title>
        <authorList>
            <person name="Dufresne A."/>
            <person name="Salanoubat M."/>
            <person name="Partensky F."/>
            <person name="Artiguenave F."/>
            <person name="Axmann I.M."/>
            <person name="Barbe V."/>
            <person name="Duprat S."/>
            <person name="Galperin M.Y."/>
            <person name="Koonin E.V."/>
            <person name="Le Gall F."/>
            <person name="Makarova K.S."/>
            <person name="Ostrowski M."/>
            <person name="Oztas S."/>
            <person name="Robert C."/>
            <person name="Rogozin I.B."/>
            <person name="Scanlan D.J."/>
            <person name="Tandeau de Marsac N."/>
            <person name="Weissenbach J."/>
            <person name="Wincker P."/>
            <person name="Wolf Y.I."/>
            <person name="Hess W.R."/>
        </authorList>
    </citation>
    <scope>NUCLEOTIDE SEQUENCE [LARGE SCALE GENOMIC DNA]</scope>
    <source>
        <strain>SARG / CCMP1375 / SS120</strain>
    </source>
</reference>
<organism>
    <name type="scientific">Prochlorococcus marinus (strain SARG / CCMP1375 / SS120)</name>
    <dbReference type="NCBI Taxonomy" id="167539"/>
    <lineage>
        <taxon>Bacteria</taxon>
        <taxon>Bacillati</taxon>
        <taxon>Cyanobacteriota</taxon>
        <taxon>Cyanophyceae</taxon>
        <taxon>Synechococcales</taxon>
        <taxon>Prochlorococcaceae</taxon>
        <taxon>Prochlorococcus</taxon>
    </lineage>
</organism>
<comment type="catalytic activity">
    <reaction evidence="1">
        <text>(4aS,6R)-4a-hydroxy-L-erythro-5,6,7,8-tetrahydrobiopterin = (6R)-L-erythro-6,7-dihydrobiopterin + H2O</text>
        <dbReference type="Rhea" id="RHEA:11920"/>
        <dbReference type="ChEBI" id="CHEBI:15377"/>
        <dbReference type="ChEBI" id="CHEBI:15642"/>
        <dbReference type="ChEBI" id="CHEBI:43120"/>
        <dbReference type="EC" id="4.2.1.96"/>
    </reaction>
</comment>
<comment type="similarity">
    <text evidence="1">Belongs to the pterin-4-alpha-carbinolamine dehydratase family.</text>
</comment>